<proteinExistence type="inferred from homology"/>
<accession>O14226</accession>
<comment type="function">
    <text evidence="1">Involved in the secretory pathway as part of the exocyst complex which tethers secretory vesicles to the sites of exocytosis. Plays a role in both the assembly of the exocyst and the polarization of this complex to specific sites of the plasma membrane for exocytosis. Also involved in assembly of the spliceosome (By similarity).</text>
</comment>
<comment type="subunit">
    <text evidence="1">Component of the exocyst complex.</text>
</comment>
<comment type="subcellular location">
    <subcellularLocation>
        <location evidence="1">Cytoplasmic vesicle</location>
        <location evidence="1">Secretory vesicle</location>
    </subcellularLocation>
    <text evidence="1">Cell periphery. The polarization of EXO84 requires actin cables (By similarity).</text>
</comment>
<comment type="similarity">
    <text evidence="3">Belongs to the EXO84 family.</text>
</comment>
<reference key="1">
    <citation type="journal article" date="2002" name="Nature">
        <title>The genome sequence of Schizosaccharomyces pombe.</title>
        <authorList>
            <person name="Wood V."/>
            <person name="Gwilliam R."/>
            <person name="Rajandream M.A."/>
            <person name="Lyne M.H."/>
            <person name="Lyne R."/>
            <person name="Stewart A."/>
            <person name="Sgouros J.G."/>
            <person name="Peat N."/>
            <person name="Hayles J."/>
            <person name="Baker S.G."/>
            <person name="Basham D."/>
            <person name="Bowman S."/>
            <person name="Brooks K."/>
            <person name="Brown D."/>
            <person name="Brown S."/>
            <person name="Chillingworth T."/>
            <person name="Churcher C.M."/>
            <person name="Collins M."/>
            <person name="Connor R."/>
            <person name="Cronin A."/>
            <person name="Davis P."/>
            <person name="Feltwell T."/>
            <person name="Fraser A."/>
            <person name="Gentles S."/>
            <person name="Goble A."/>
            <person name="Hamlin N."/>
            <person name="Harris D.E."/>
            <person name="Hidalgo J."/>
            <person name="Hodgson G."/>
            <person name="Holroyd S."/>
            <person name="Hornsby T."/>
            <person name="Howarth S."/>
            <person name="Huckle E.J."/>
            <person name="Hunt S."/>
            <person name="Jagels K."/>
            <person name="James K.D."/>
            <person name="Jones L."/>
            <person name="Jones M."/>
            <person name="Leather S."/>
            <person name="McDonald S."/>
            <person name="McLean J."/>
            <person name="Mooney P."/>
            <person name="Moule S."/>
            <person name="Mungall K.L."/>
            <person name="Murphy L.D."/>
            <person name="Niblett D."/>
            <person name="Odell C."/>
            <person name="Oliver K."/>
            <person name="O'Neil S."/>
            <person name="Pearson D."/>
            <person name="Quail M.A."/>
            <person name="Rabbinowitsch E."/>
            <person name="Rutherford K.M."/>
            <person name="Rutter S."/>
            <person name="Saunders D."/>
            <person name="Seeger K."/>
            <person name="Sharp S."/>
            <person name="Skelton J."/>
            <person name="Simmonds M.N."/>
            <person name="Squares R."/>
            <person name="Squares S."/>
            <person name="Stevens K."/>
            <person name="Taylor K."/>
            <person name="Taylor R.G."/>
            <person name="Tivey A."/>
            <person name="Walsh S.V."/>
            <person name="Warren T."/>
            <person name="Whitehead S."/>
            <person name="Woodward J.R."/>
            <person name="Volckaert G."/>
            <person name="Aert R."/>
            <person name="Robben J."/>
            <person name="Grymonprez B."/>
            <person name="Weltjens I."/>
            <person name="Vanstreels E."/>
            <person name="Rieger M."/>
            <person name="Schaefer M."/>
            <person name="Mueller-Auer S."/>
            <person name="Gabel C."/>
            <person name="Fuchs M."/>
            <person name="Duesterhoeft A."/>
            <person name="Fritzc C."/>
            <person name="Holzer E."/>
            <person name="Moestl D."/>
            <person name="Hilbert H."/>
            <person name="Borzym K."/>
            <person name="Langer I."/>
            <person name="Beck A."/>
            <person name="Lehrach H."/>
            <person name="Reinhardt R."/>
            <person name="Pohl T.M."/>
            <person name="Eger P."/>
            <person name="Zimmermann W."/>
            <person name="Wedler H."/>
            <person name="Wambutt R."/>
            <person name="Purnelle B."/>
            <person name="Goffeau A."/>
            <person name="Cadieu E."/>
            <person name="Dreano S."/>
            <person name="Gloux S."/>
            <person name="Lelaure V."/>
            <person name="Mottier S."/>
            <person name="Galibert F."/>
            <person name="Aves S.J."/>
            <person name="Xiang Z."/>
            <person name="Hunt C."/>
            <person name="Moore K."/>
            <person name="Hurst S.M."/>
            <person name="Lucas M."/>
            <person name="Rochet M."/>
            <person name="Gaillardin C."/>
            <person name="Tallada V.A."/>
            <person name="Garzon A."/>
            <person name="Thode G."/>
            <person name="Daga R.R."/>
            <person name="Cruzado L."/>
            <person name="Jimenez J."/>
            <person name="Sanchez M."/>
            <person name="del Rey F."/>
            <person name="Benito J."/>
            <person name="Dominguez A."/>
            <person name="Revuelta J.L."/>
            <person name="Moreno S."/>
            <person name="Armstrong J."/>
            <person name="Forsburg S.L."/>
            <person name="Cerutti L."/>
            <person name="Lowe T."/>
            <person name="McCombie W.R."/>
            <person name="Paulsen I."/>
            <person name="Potashkin J."/>
            <person name="Shpakovski G.V."/>
            <person name="Ussery D."/>
            <person name="Barrell B.G."/>
            <person name="Nurse P."/>
        </authorList>
    </citation>
    <scope>NUCLEOTIDE SEQUENCE [LARGE SCALE GENOMIC DNA]</scope>
    <source>
        <strain>972 / ATCC 24843</strain>
    </source>
</reference>
<gene>
    <name type="primary">exo84</name>
    <name type="ORF">SPAC6F12.08c</name>
</gene>
<dbReference type="EMBL" id="CU329670">
    <property type="protein sequence ID" value="CAB11092.2"/>
    <property type="molecule type" value="Genomic_DNA"/>
</dbReference>
<dbReference type="PIR" id="T11659">
    <property type="entry name" value="T11659"/>
</dbReference>
<dbReference type="RefSeq" id="NP_593294.2">
    <property type="nucleotide sequence ID" value="NM_001018724.3"/>
</dbReference>
<dbReference type="SMR" id="O14226"/>
<dbReference type="BioGRID" id="278016">
    <property type="interactions" value="1"/>
</dbReference>
<dbReference type="FunCoup" id="O14226">
    <property type="interactions" value="29"/>
</dbReference>
<dbReference type="STRING" id="284812.O14226"/>
<dbReference type="iPTMnet" id="O14226"/>
<dbReference type="PaxDb" id="4896-SPAC6F12.08c.1"/>
<dbReference type="EnsemblFungi" id="SPAC6F12.08c.1">
    <property type="protein sequence ID" value="SPAC6F12.08c.1:pep"/>
    <property type="gene ID" value="SPAC6F12.08c"/>
</dbReference>
<dbReference type="PomBase" id="SPAC6F12.08c">
    <property type="gene designation" value="exo84"/>
</dbReference>
<dbReference type="VEuPathDB" id="FungiDB:SPAC6F12.08c"/>
<dbReference type="eggNOG" id="KOG2215">
    <property type="taxonomic scope" value="Eukaryota"/>
</dbReference>
<dbReference type="HOGENOM" id="CLU_495363_0_0_1"/>
<dbReference type="InParanoid" id="O14226"/>
<dbReference type="OMA" id="HMGVRKN"/>
<dbReference type="PhylomeDB" id="O14226"/>
<dbReference type="PRO" id="PR:O14226"/>
<dbReference type="Proteomes" id="UP000002485">
    <property type="component" value="Chromosome I"/>
</dbReference>
<dbReference type="GO" id="GO:0005737">
    <property type="term" value="C:cytoplasm"/>
    <property type="evidence" value="ECO:0007005"/>
    <property type="project" value="PomBase"/>
</dbReference>
<dbReference type="GO" id="GO:0005829">
    <property type="term" value="C:cytosol"/>
    <property type="evidence" value="ECO:0007005"/>
    <property type="project" value="PomBase"/>
</dbReference>
<dbReference type="GO" id="GO:0000145">
    <property type="term" value="C:exocyst"/>
    <property type="evidence" value="ECO:0000250"/>
    <property type="project" value="PomBase"/>
</dbReference>
<dbReference type="GO" id="GO:1990819">
    <property type="term" value="C:mating projection actin fusion focus"/>
    <property type="evidence" value="ECO:0000314"/>
    <property type="project" value="PomBase"/>
</dbReference>
<dbReference type="GO" id="GO:0030133">
    <property type="term" value="C:transport vesicle"/>
    <property type="evidence" value="ECO:0007669"/>
    <property type="project" value="UniProtKB-SubCell"/>
</dbReference>
<dbReference type="GO" id="GO:0015031">
    <property type="term" value="P:protein transport"/>
    <property type="evidence" value="ECO:0007669"/>
    <property type="project" value="UniProtKB-KW"/>
</dbReference>
<dbReference type="GO" id="GO:0090522">
    <property type="term" value="P:vesicle tethering involved in exocytosis"/>
    <property type="evidence" value="ECO:0000305"/>
    <property type="project" value="PomBase"/>
</dbReference>
<dbReference type="Gene3D" id="1.20.58.1220">
    <property type="entry name" value="Exo84p, C-terminal helical domain"/>
    <property type="match status" value="1"/>
</dbReference>
<dbReference type="Gene3D" id="1.20.58.1210">
    <property type="entry name" value="Exo84p, N-terminal helical domain"/>
    <property type="match status" value="1"/>
</dbReference>
<dbReference type="Gene3D" id="2.30.29.30">
    <property type="entry name" value="Pleckstrin-homology domain (PH domain)/Phosphotyrosine-binding domain (PTB)"/>
    <property type="match status" value="1"/>
</dbReference>
<dbReference type="InterPro" id="IPR016159">
    <property type="entry name" value="Cullin_repeat-like_dom_sf"/>
</dbReference>
<dbReference type="InterPro" id="IPR033961">
    <property type="entry name" value="Exo84"/>
</dbReference>
<dbReference type="InterPro" id="IPR032403">
    <property type="entry name" value="Exo84_C"/>
</dbReference>
<dbReference type="InterPro" id="IPR042561">
    <property type="entry name" value="Exo84_C_1"/>
</dbReference>
<dbReference type="InterPro" id="IPR042560">
    <property type="entry name" value="Exo84_C_2"/>
</dbReference>
<dbReference type="InterPro" id="IPR011993">
    <property type="entry name" value="PH-like_dom_sf"/>
</dbReference>
<dbReference type="PANTHER" id="PTHR21426">
    <property type="entry name" value="EXOCYST COMPLEX COMPONENT 8"/>
    <property type="match status" value="1"/>
</dbReference>
<dbReference type="PANTHER" id="PTHR21426:SF12">
    <property type="entry name" value="EXOCYST COMPLEX COMPONENT 8"/>
    <property type="match status" value="1"/>
</dbReference>
<dbReference type="Pfam" id="PF16528">
    <property type="entry name" value="Exo84_C"/>
    <property type="match status" value="1"/>
</dbReference>
<dbReference type="Pfam" id="PF25345">
    <property type="entry name" value="PH_EXO84"/>
    <property type="match status" value="1"/>
</dbReference>
<dbReference type="SUPFAM" id="SSF74788">
    <property type="entry name" value="Cullin repeat-like"/>
    <property type="match status" value="1"/>
</dbReference>
<name>EXO84_SCHPO</name>
<organism>
    <name type="scientific">Schizosaccharomyces pombe (strain 972 / ATCC 24843)</name>
    <name type="common">Fission yeast</name>
    <dbReference type="NCBI Taxonomy" id="284812"/>
    <lineage>
        <taxon>Eukaryota</taxon>
        <taxon>Fungi</taxon>
        <taxon>Dikarya</taxon>
        <taxon>Ascomycota</taxon>
        <taxon>Taphrinomycotina</taxon>
        <taxon>Schizosaccharomycetes</taxon>
        <taxon>Schizosaccharomycetales</taxon>
        <taxon>Schizosaccharomycetaceae</taxon>
        <taxon>Schizosaccharomyces</taxon>
    </lineage>
</organism>
<feature type="chain" id="PRO_0000118985" description="Exocyst complex component exo84">
    <location>
        <begin position="1"/>
        <end position="584"/>
    </location>
</feature>
<feature type="region of interest" description="Disordered" evidence="2">
    <location>
        <begin position="19"/>
        <end position="45"/>
    </location>
</feature>
<feature type="compositionally biased region" description="Polar residues" evidence="2">
    <location>
        <begin position="19"/>
        <end position="35"/>
    </location>
</feature>
<sequence length="584" mass="68593">MPDNPSSFEDEFMKSNHLSVASESIPNESQRQSPTRLRVGTSKTDDIYRQKRQTKHIISQNEVFLQPKFFDNQNFDAQSYLNDVLQDLSEDEFVSLYNKLLRIHMGVRKNLEKNFYKNLNEYVFISGEVESMTSDFKKFQSLLKTLETDIEGLNLVDHTHDPSDESIKQTVQRLRSSIEGLDEAFWEAPQRQLICEQYNWMLINIDNQRPKLLVNMLLFNDRLLVTTSHMKEVDFPAKQQVLYNWNLTEISISSIETYGPAGAEMLQKEKEVSLYKLSINHNNKTTLLAVHNSEERDYMVRQARHHQLQELENWSRKHDEDLEFSRELEYHTKSEQADMCSYTSFQVLCKNLDTQDILQAYAKQRNMVKEISMQFDHLDIQISLQEFTDAIRNLALIQNKLERGNLNELFAEFFADKLHNRKRKVTEILLHQLGFKGISLSHGKEIVRYLRSLGHEKEGQGVFMKSRTLLIKEKCLNVQLEKDTPNFIDACAFIVFRCLAQTTSSYLQLFELKKLDPAYRNWIFQQIEALVDLIENQYKHLAHDRSYTDAVSKIMTYNTELKEAKIDAMPILQRLFDVHSKDLK</sequence>
<evidence type="ECO:0000250" key="1"/>
<evidence type="ECO:0000256" key="2">
    <source>
        <dbReference type="SAM" id="MobiDB-lite"/>
    </source>
</evidence>
<evidence type="ECO:0000305" key="3"/>
<protein>
    <recommendedName>
        <fullName>Exocyst complex component exo84</fullName>
    </recommendedName>
</protein>
<keyword id="KW-0968">Cytoplasmic vesicle</keyword>
<keyword id="KW-0268">Exocytosis</keyword>
<keyword id="KW-0653">Protein transport</keyword>
<keyword id="KW-1185">Reference proteome</keyword>
<keyword id="KW-0813">Transport</keyword>